<name>SGPL_DROME</name>
<keyword id="KW-0217">Developmental protein</keyword>
<keyword id="KW-0256">Endoplasmic reticulum</keyword>
<keyword id="KW-0443">Lipid metabolism</keyword>
<keyword id="KW-0456">Lyase</keyword>
<keyword id="KW-0472">Membrane</keyword>
<keyword id="KW-0663">Pyridoxal phosphate</keyword>
<keyword id="KW-1185">Reference proteome</keyword>
<keyword id="KW-0735">Signal-anchor</keyword>
<keyword id="KW-0746">Sphingolipid metabolism</keyword>
<keyword id="KW-0812">Transmembrane</keyword>
<keyword id="KW-1133">Transmembrane helix</keyword>
<sequence length="545" mass="60305">MRPFSGSDCLKPVTEGINRAFGAKEPWQVATITATTVLGGVWLWTVICQDENLYIRGKRQFFKFAKKIPAVRRQVETELAKAKNDFETEIKKSNAHLTYSETLPEKGLSKEEILRLVDEHLKTGHYNWRDGRVSGAVYGYKPDLVELVTEVYGKASYTNPLHADLFPGVCKMEAEVVRMACNLFHGNSASCGTMTTGGTESIVMAMKAYRDFAREYKGITRPNIVVPKTVHAAFDKGGQYFNIHVRSVDVDPETYEVDIKKFKRAINRNTILLVGSAPNFPYGTIDDIEAIAALGVKYDIPVHVDACLGSFVVALVRNAGYKLRPFDFEVKGVTSISADTHKYGFAPKGSSVILYSDKKYKDHQFTVTTDWPGGVYGSPTVNGSRAGGIIAACWATMMSFGYDGYLEATKRIVDTARYIERGVRDIDGIFIFGKPATSVIALGSNVFDIFRLSDSLCKLGWNLNALQFPSGIHLCVTDMHTQPGVADKFIADVRSCTAEIMKDPGQPVVGKMALYGMAQSIPDRSVIGEVTRLFLHSMYYTPSQK</sequence>
<reference key="1">
    <citation type="submission" date="2000-06" db="EMBL/GenBank/DDBJ databases">
        <title>Functional expression of sphingosine-phosphate lyase from Arabidopsis and Drosophila.</title>
        <authorList>
            <person name="Van Veldhoven P.P."/>
        </authorList>
    </citation>
    <scope>NUCLEOTIDE SEQUENCE [MRNA]</scope>
</reference>
<reference key="2">
    <citation type="journal article" date="2003" name="Development">
        <title>Sply regulation of sphingolipid signaling molecules is essential for Drosophila development.</title>
        <authorList>
            <person name="Herr D.R."/>
            <person name="Fyrst H."/>
            <person name="Phan V."/>
            <person name="Heinecke K."/>
            <person name="Georges R."/>
            <person name="Harris G.L."/>
            <person name="Saba J.D."/>
        </authorList>
    </citation>
    <scope>NUCLEOTIDE SEQUENCE [MRNA]</scope>
    <scope>FUNCTION</scope>
    <scope>CATALYTIC ACTIVITY</scope>
    <scope>PATHWAY</scope>
    <scope>TISSUE SPECIFICITY</scope>
    <scope>DEVELOPMENTAL STAGE</scope>
    <source>
        <strain>Berkeley</strain>
        <tissue>Embryo</tissue>
    </source>
</reference>
<reference key="3">
    <citation type="journal article" date="2000" name="Science">
        <title>The genome sequence of Drosophila melanogaster.</title>
        <authorList>
            <person name="Adams M.D."/>
            <person name="Celniker S.E."/>
            <person name="Holt R.A."/>
            <person name="Evans C.A."/>
            <person name="Gocayne J.D."/>
            <person name="Amanatides P.G."/>
            <person name="Scherer S.E."/>
            <person name="Li P.W."/>
            <person name="Hoskins R.A."/>
            <person name="Galle R.F."/>
            <person name="George R.A."/>
            <person name="Lewis S.E."/>
            <person name="Richards S."/>
            <person name="Ashburner M."/>
            <person name="Henderson S.N."/>
            <person name="Sutton G.G."/>
            <person name="Wortman J.R."/>
            <person name="Yandell M.D."/>
            <person name="Zhang Q."/>
            <person name="Chen L.X."/>
            <person name="Brandon R.C."/>
            <person name="Rogers Y.-H.C."/>
            <person name="Blazej R.G."/>
            <person name="Champe M."/>
            <person name="Pfeiffer B.D."/>
            <person name="Wan K.H."/>
            <person name="Doyle C."/>
            <person name="Baxter E.G."/>
            <person name="Helt G."/>
            <person name="Nelson C.R."/>
            <person name="Miklos G.L.G."/>
            <person name="Abril J.F."/>
            <person name="Agbayani A."/>
            <person name="An H.-J."/>
            <person name="Andrews-Pfannkoch C."/>
            <person name="Baldwin D."/>
            <person name="Ballew R.M."/>
            <person name="Basu A."/>
            <person name="Baxendale J."/>
            <person name="Bayraktaroglu L."/>
            <person name="Beasley E.M."/>
            <person name="Beeson K.Y."/>
            <person name="Benos P.V."/>
            <person name="Berman B.P."/>
            <person name="Bhandari D."/>
            <person name="Bolshakov S."/>
            <person name="Borkova D."/>
            <person name="Botchan M.R."/>
            <person name="Bouck J."/>
            <person name="Brokstein P."/>
            <person name="Brottier P."/>
            <person name="Burtis K.C."/>
            <person name="Busam D.A."/>
            <person name="Butler H."/>
            <person name="Cadieu E."/>
            <person name="Center A."/>
            <person name="Chandra I."/>
            <person name="Cherry J.M."/>
            <person name="Cawley S."/>
            <person name="Dahlke C."/>
            <person name="Davenport L.B."/>
            <person name="Davies P."/>
            <person name="de Pablos B."/>
            <person name="Delcher A."/>
            <person name="Deng Z."/>
            <person name="Mays A.D."/>
            <person name="Dew I."/>
            <person name="Dietz S.M."/>
            <person name="Dodson K."/>
            <person name="Doup L.E."/>
            <person name="Downes M."/>
            <person name="Dugan-Rocha S."/>
            <person name="Dunkov B.C."/>
            <person name="Dunn P."/>
            <person name="Durbin K.J."/>
            <person name="Evangelista C.C."/>
            <person name="Ferraz C."/>
            <person name="Ferriera S."/>
            <person name="Fleischmann W."/>
            <person name="Fosler C."/>
            <person name="Gabrielian A.E."/>
            <person name="Garg N.S."/>
            <person name="Gelbart W.M."/>
            <person name="Glasser K."/>
            <person name="Glodek A."/>
            <person name="Gong F."/>
            <person name="Gorrell J.H."/>
            <person name="Gu Z."/>
            <person name="Guan P."/>
            <person name="Harris M."/>
            <person name="Harris N.L."/>
            <person name="Harvey D.A."/>
            <person name="Heiman T.J."/>
            <person name="Hernandez J.R."/>
            <person name="Houck J."/>
            <person name="Hostin D."/>
            <person name="Houston K.A."/>
            <person name="Howland T.J."/>
            <person name="Wei M.-H."/>
            <person name="Ibegwam C."/>
            <person name="Jalali M."/>
            <person name="Kalush F."/>
            <person name="Karpen G.H."/>
            <person name="Ke Z."/>
            <person name="Kennison J.A."/>
            <person name="Ketchum K.A."/>
            <person name="Kimmel B.E."/>
            <person name="Kodira C.D."/>
            <person name="Kraft C.L."/>
            <person name="Kravitz S."/>
            <person name="Kulp D."/>
            <person name="Lai Z."/>
            <person name="Lasko P."/>
            <person name="Lei Y."/>
            <person name="Levitsky A.A."/>
            <person name="Li J.H."/>
            <person name="Li Z."/>
            <person name="Liang Y."/>
            <person name="Lin X."/>
            <person name="Liu X."/>
            <person name="Mattei B."/>
            <person name="McIntosh T.C."/>
            <person name="McLeod M.P."/>
            <person name="McPherson D."/>
            <person name="Merkulov G."/>
            <person name="Milshina N.V."/>
            <person name="Mobarry C."/>
            <person name="Morris J."/>
            <person name="Moshrefi A."/>
            <person name="Mount S.M."/>
            <person name="Moy M."/>
            <person name="Murphy B."/>
            <person name="Murphy L."/>
            <person name="Muzny D.M."/>
            <person name="Nelson D.L."/>
            <person name="Nelson D.R."/>
            <person name="Nelson K.A."/>
            <person name="Nixon K."/>
            <person name="Nusskern D.R."/>
            <person name="Pacleb J.M."/>
            <person name="Palazzolo M."/>
            <person name="Pittman G.S."/>
            <person name="Pan S."/>
            <person name="Pollard J."/>
            <person name="Puri V."/>
            <person name="Reese M.G."/>
            <person name="Reinert K."/>
            <person name="Remington K."/>
            <person name="Saunders R.D.C."/>
            <person name="Scheeler F."/>
            <person name="Shen H."/>
            <person name="Shue B.C."/>
            <person name="Siden-Kiamos I."/>
            <person name="Simpson M."/>
            <person name="Skupski M.P."/>
            <person name="Smith T.J."/>
            <person name="Spier E."/>
            <person name="Spradling A.C."/>
            <person name="Stapleton M."/>
            <person name="Strong R."/>
            <person name="Sun E."/>
            <person name="Svirskas R."/>
            <person name="Tector C."/>
            <person name="Turner R."/>
            <person name="Venter E."/>
            <person name="Wang A.H."/>
            <person name="Wang X."/>
            <person name="Wang Z.-Y."/>
            <person name="Wassarman D.A."/>
            <person name="Weinstock G.M."/>
            <person name="Weissenbach J."/>
            <person name="Williams S.M."/>
            <person name="Woodage T."/>
            <person name="Worley K.C."/>
            <person name="Wu D."/>
            <person name="Yang S."/>
            <person name="Yao Q.A."/>
            <person name="Ye J."/>
            <person name="Yeh R.-F."/>
            <person name="Zaveri J.S."/>
            <person name="Zhan M."/>
            <person name="Zhang G."/>
            <person name="Zhao Q."/>
            <person name="Zheng L."/>
            <person name="Zheng X.H."/>
            <person name="Zhong F.N."/>
            <person name="Zhong W."/>
            <person name="Zhou X."/>
            <person name="Zhu S.C."/>
            <person name="Zhu X."/>
            <person name="Smith H.O."/>
            <person name="Gibbs R.A."/>
            <person name="Myers E.W."/>
            <person name="Rubin G.M."/>
            <person name="Venter J.C."/>
        </authorList>
    </citation>
    <scope>NUCLEOTIDE SEQUENCE [LARGE SCALE GENOMIC DNA]</scope>
    <source>
        <strain>Berkeley</strain>
    </source>
</reference>
<reference key="4">
    <citation type="journal article" date="2002" name="Genome Biol.">
        <title>Annotation of the Drosophila melanogaster euchromatic genome: a systematic review.</title>
        <authorList>
            <person name="Misra S."/>
            <person name="Crosby M.A."/>
            <person name="Mungall C.J."/>
            <person name="Matthews B.B."/>
            <person name="Campbell K.S."/>
            <person name="Hradecky P."/>
            <person name="Huang Y."/>
            <person name="Kaminker J.S."/>
            <person name="Millburn G.H."/>
            <person name="Prochnik S.E."/>
            <person name="Smith C.D."/>
            <person name="Tupy J.L."/>
            <person name="Whitfield E.J."/>
            <person name="Bayraktaroglu L."/>
            <person name="Berman B.P."/>
            <person name="Bettencourt B.R."/>
            <person name="Celniker S.E."/>
            <person name="de Grey A.D.N.J."/>
            <person name="Drysdale R.A."/>
            <person name="Harris N.L."/>
            <person name="Richter J."/>
            <person name="Russo S."/>
            <person name="Schroeder A.J."/>
            <person name="Shu S.Q."/>
            <person name="Stapleton M."/>
            <person name="Yamada C."/>
            <person name="Ashburner M."/>
            <person name="Gelbart W.M."/>
            <person name="Rubin G.M."/>
            <person name="Lewis S.E."/>
        </authorList>
    </citation>
    <scope>GENOME REANNOTATION</scope>
    <source>
        <strain>Berkeley</strain>
    </source>
</reference>
<reference key="5">
    <citation type="journal article" date="2002" name="Genome Biol.">
        <title>A Drosophila full-length cDNA resource.</title>
        <authorList>
            <person name="Stapleton M."/>
            <person name="Carlson J.W."/>
            <person name="Brokstein P."/>
            <person name="Yu C."/>
            <person name="Champe M."/>
            <person name="George R.A."/>
            <person name="Guarin H."/>
            <person name="Kronmiller B."/>
            <person name="Pacleb J.M."/>
            <person name="Park S."/>
            <person name="Wan K.H."/>
            <person name="Rubin G.M."/>
            <person name="Celniker S.E."/>
        </authorList>
    </citation>
    <scope>NUCLEOTIDE SEQUENCE [LARGE SCALE MRNA]</scope>
    <source>
        <strain>Berkeley</strain>
        <tissue>Embryo</tissue>
    </source>
</reference>
<reference key="6">
    <citation type="journal article" date="2017" name="J. Clin. Invest.">
        <title>Mutations in sphingosine-1-phosphate lyase cause nephrosis with ichthyosis and adrenal insufficiency.</title>
        <authorList>
            <person name="Lovric S."/>
            <person name="Goncalves S."/>
            <person name="Gee H.Y."/>
            <person name="Oskouian B."/>
            <person name="Srinivas H."/>
            <person name="Choi W.I."/>
            <person name="Shril S."/>
            <person name="Ashraf S."/>
            <person name="Tan W."/>
            <person name="Rao J."/>
            <person name="Airik M."/>
            <person name="Schapiro D."/>
            <person name="Braun D.A."/>
            <person name="Sadowski C.E."/>
            <person name="Widmeier E."/>
            <person name="Jobst-Schwan T."/>
            <person name="Schmidt J.M."/>
            <person name="Girik V."/>
            <person name="Capitani G."/>
            <person name="Suh J.H."/>
            <person name="Lachaussee N."/>
            <person name="Arrondel C."/>
            <person name="Patat J."/>
            <person name="Gribouval O."/>
            <person name="Furlano M."/>
            <person name="Boyer O."/>
            <person name="Schmitt A."/>
            <person name="Vuiblet V."/>
            <person name="Hashmi S."/>
            <person name="Wilcken R."/>
            <person name="Bernier F.P."/>
            <person name="Innes A.M."/>
            <person name="Parboosingh J.S."/>
            <person name="Lamont R.E."/>
            <person name="Midgley J.P."/>
            <person name="Wright N."/>
            <person name="Majewski J."/>
            <person name="Zenker M."/>
            <person name="Schaefer F."/>
            <person name="Kuss N."/>
            <person name="Greil J."/>
            <person name="Giese T."/>
            <person name="Schwarz K."/>
            <person name="Catheline V."/>
            <person name="Schanze D."/>
            <person name="Franke I."/>
            <person name="Sznajer Y."/>
            <person name="Truant A.S."/>
            <person name="Adams B."/>
            <person name="Desir J."/>
            <person name="Biemann R."/>
            <person name="Pei Y."/>
            <person name="Ars E."/>
            <person name="Lloberas N."/>
            <person name="Madrid A."/>
            <person name="Dharnidharka V.R."/>
            <person name="Connolly A.M."/>
            <person name="Willing M.C."/>
            <person name="Cooper M.A."/>
            <person name="Lifton R.P."/>
            <person name="Simons M."/>
            <person name="Riezman H."/>
            <person name="Antignac C."/>
            <person name="Saba J.D."/>
            <person name="Hildebrandt F."/>
        </authorList>
    </citation>
    <scope>FUNCTION</scope>
    <scope>PATHWAY</scope>
    <scope>DISRUPTION PHENOTYPE</scope>
    <scope>MUTAGENESIS OF GLU-119; ARG-210 AND SER-335</scope>
</reference>
<proteinExistence type="evidence at protein level"/>
<accession>Q9V7Y2</accession>
<accession>Q0E946</accession>
<organism>
    <name type="scientific">Drosophila melanogaster</name>
    <name type="common">Fruit fly</name>
    <dbReference type="NCBI Taxonomy" id="7227"/>
    <lineage>
        <taxon>Eukaryota</taxon>
        <taxon>Metazoa</taxon>
        <taxon>Ecdysozoa</taxon>
        <taxon>Arthropoda</taxon>
        <taxon>Hexapoda</taxon>
        <taxon>Insecta</taxon>
        <taxon>Pterygota</taxon>
        <taxon>Neoptera</taxon>
        <taxon>Endopterygota</taxon>
        <taxon>Diptera</taxon>
        <taxon>Brachycera</taxon>
        <taxon>Muscomorpha</taxon>
        <taxon>Ephydroidea</taxon>
        <taxon>Drosophilidae</taxon>
        <taxon>Drosophila</taxon>
        <taxon>Sophophora</taxon>
    </lineage>
</organism>
<dbReference type="EC" id="4.1.2.27" evidence="4"/>
<dbReference type="EMBL" id="AJ297394">
    <property type="protein sequence ID" value="CAC10531.1"/>
    <property type="molecule type" value="mRNA"/>
</dbReference>
<dbReference type="EMBL" id="AE013599">
    <property type="protein sequence ID" value="AAF57903.1"/>
    <property type="molecule type" value="Genomic_DNA"/>
</dbReference>
<dbReference type="EMBL" id="AY052075">
    <property type="protein sequence ID" value="AAK93499.1"/>
    <property type="molecule type" value="mRNA"/>
</dbReference>
<dbReference type="RefSeq" id="NP_652032.1">
    <property type="nucleotide sequence ID" value="NM_143775.3"/>
</dbReference>
<dbReference type="RefSeq" id="NP_725652.1">
    <property type="nucleotide sequence ID" value="NM_166215.2"/>
</dbReference>
<dbReference type="SMR" id="Q9V7Y2"/>
<dbReference type="BioGRID" id="70079">
    <property type="interactions" value="6"/>
</dbReference>
<dbReference type="FunCoup" id="Q9V7Y2">
    <property type="interactions" value="1297"/>
</dbReference>
<dbReference type="IntAct" id="Q9V7Y2">
    <property type="interactions" value="3"/>
</dbReference>
<dbReference type="MINT" id="Q9V7Y2"/>
<dbReference type="STRING" id="7227.FBpp0086158"/>
<dbReference type="PaxDb" id="7227-FBpp0086158"/>
<dbReference type="DNASU" id="46059"/>
<dbReference type="EnsemblMetazoa" id="FBtr0087007">
    <property type="protein sequence ID" value="FBpp0086158"/>
    <property type="gene ID" value="FBgn0010591"/>
</dbReference>
<dbReference type="EnsemblMetazoa" id="FBtr0087008">
    <property type="protein sequence ID" value="FBpp0086159"/>
    <property type="gene ID" value="FBgn0010591"/>
</dbReference>
<dbReference type="GeneID" id="46059"/>
<dbReference type="KEGG" id="dme:Dmel_CG8946"/>
<dbReference type="AGR" id="FB:FBgn0010591"/>
<dbReference type="CTD" id="46059"/>
<dbReference type="FlyBase" id="FBgn0010591">
    <property type="gene designation" value="Sply"/>
</dbReference>
<dbReference type="VEuPathDB" id="VectorBase:FBgn0010591"/>
<dbReference type="eggNOG" id="KOG1383">
    <property type="taxonomic scope" value="Eukaryota"/>
</dbReference>
<dbReference type="GeneTree" id="ENSGT00390000000046"/>
<dbReference type="HOGENOM" id="CLU_028929_1_0_1"/>
<dbReference type="InParanoid" id="Q9V7Y2"/>
<dbReference type="OMA" id="FKDHQFT"/>
<dbReference type="OrthoDB" id="10254570at2759"/>
<dbReference type="PhylomeDB" id="Q9V7Y2"/>
<dbReference type="Reactome" id="R-DME-9845614">
    <property type="pathway name" value="Sphingolipid catabolism"/>
</dbReference>
<dbReference type="SignaLink" id="Q9V7Y2"/>
<dbReference type="UniPathway" id="UPA00222"/>
<dbReference type="BioGRID-ORCS" id="46059">
    <property type="hits" value="0 hits in 1 CRISPR screen"/>
</dbReference>
<dbReference type="ChiTaRS" id="Sply">
    <property type="organism name" value="fly"/>
</dbReference>
<dbReference type="GenomeRNAi" id="46059"/>
<dbReference type="PRO" id="PR:Q9V7Y2"/>
<dbReference type="Proteomes" id="UP000000803">
    <property type="component" value="Chromosome 2R"/>
</dbReference>
<dbReference type="Bgee" id="FBgn0010591">
    <property type="expression patterns" value="Expressed in embryonic/larval hemocyte (Drosophila) and 117 other cell types or tissues"/>
</dbReference>
<dbReference type="GO" id="GO:0005783">
    <property type="term" value="C:endoplasmic reticulum"/>
    <property type="evidence" value="ECO:0000250"/>
    <property type="project" value="UniProtKB"/>
</dbReference>
<dbReference type="GO" id="GO:0005789">
    <property type="term" value="C:endoplasmic reticulum membrane"/>
    <property type="evidence" value="ECO:0007669"/>
    <property type="project" value="UniProtKB-SubCell"/>
</dbReference>
<dbReference type="GO" id="GO:0016020">
    <property type="term" value="C:membrane"/>
    <property type="evidence" value="ECO:0000255"/>
    <property type="project" value="FlyBase"/>
</dbReference>
<dbReference type="GO" id="GO:0030170">
    <property type="term" value="F:pyridoxal phosphate binding"/>
    <property type="evidence" value="ECO:0007669"/>
    <property type="project" value="InterPro"/>
</dbReference>
<dbReference type="GO" id="GO:0008117">
    <property type="term" value="F:sphinganine-1-phosphate aldolase activity"/>
    <property type="evidence" value="ECO:0000314"/>
    <property type="project" value="FlyBase"/>
</dbReference>
<dbReference type="GO" id="GO:0007527">
    <property type="term" value="P:adult somatic muscle development"/>
    <property type="evidence" value="ECO:0000315"/>
    <property type="project" value="FlyBase"/>
</dbReference>
<dbReference type="GO" id="GO:0019752">
    <property type="term" value="P:carboxylic acid metabolic process"/>
    <property type="evidence" value="ECO:0007669"/>
    <property type="project" value="InterPro"/>
</dbReference>
<dbReference type="GO" id="GO:0030149">
    <property type="term" value="P:sphingolipid catabolic process"/>
    <property type="evidence" value="ECO:0000315"/>
    <property type="project" value="UniProtKB"/>
</dbReference>
<dbReference type="CDD" id="cd06450">
    <property type="entry name" value="DOPA_deC_like"/>
    <property type="match status" value="1"/>
</dbReference>
<dbReference type="FunFam" id="3.90.1150.10:FF:000247">
    <property type="entry name" value="Sphingosine phosphate lyase, putative"/>
    <property type="match status" value="1"/>
</dbReference>
<dbReference type="FunFam" id="6.10.140.2150:FF:000001">
    <property type="entry name" value="Sphingosine-1-phosphate lyase 1"/>
    <property type="match status" value="1"/>
</dbReference>
<dbReference type="FunFam" id="3.40.640.10:FF:000020">
    <property type="entry name" value="sphingosine-1-phosphate lyase 1"/>
    <property type="match status" value="1"/>
</dbReference>
<dbReference type="Gene3D" id="6.10.140.2150">
    <property type="match status" value="1"/>
</dbReference>
<dbReference type="Gene3D" id="3.90.1150.10">
    <property type="entry name" value="Aspartate Aminotransferase, domain 1"/>
    <property type="match status" value="1"/>
</dbReference>
<dbReference type="Gene3D" id="3.40.640.10">
    <property type="entry name" value="Type I PLP-dependent aspartate aminotransferase-like (Major domain)"/>
    <property type="match status" value="1"/>
</dbReference>
<dbReference type="InterPro" id="IPR050477">
    <property type="entry name" value="GrpII_AminoAcid_Decarb"/>
</dbReference>
<dbReference type="InterPro" id="IPR002129">
    <property type="entry name" value="PyrdxlP-dep_de-COase"/>
</dbReference>
<dbReference type="InterPro" id="IPR015424">
    <property type="entry name" value="PyrdxlP-dep_Trfase"/>
</dbReference>
<dbReference type="InterPro" id="IPR015421">
    <property type="entry name" value="PyrdxlP-dep_Trfase_major"/>
</dbReference>
<dbReference type="InterPro" id="IPR015422">
    <property type="entry name" value="PyrdxlP-dep_Trfase_small"/>
</dbReference>
<dbReference type="PANTHER" id="PTHR42735">
    <property type="match status" value="1"/>
</dbReference>
<dbReference type="PANTHER" id="PTHR42735:SF6">
    <property type="entry name" value="SPHINGOSINE-1-PHOSPHATE LYASE 1"/>
    <property type="match status" value="1"/>
</dbReference>
<dbReference type="Pfam" id="PF00282">
    <property type="entry name" value="Pyridoxal_deC"/>
    <property type="match status" value="1"/>
</dbReference>
<dbReference type="SUPFAM" id="SSF53383">
    <property type="entry name" value="PLP-dependent transferases"/>
    <property type="match status" value="1"/>
</dbReference>
<feature type="chain" id="PRO_0000147016" description="Sphingosine-1-phosphate lyase">
    <location>
        <begin position="1"/>
        <end position="545"/>
    </location>
</feature>
<feature type="topological domain" description="Lumenal" evidence="3">
    <location>
        <begin position="1"/>
        <end position="26"/>
    </location>
</feature>
<feature type="transmembrane region" description="Helical; Signal-anchor for type III membrane protein" evidence="3">
    <location>
        <begin position="27"/>
        <end position="47"/>
    </location>
</feature>
<feature type="topological domain" description="Cytoplasmic" evidence="3">
    <location>
        <begin position="48"/>
        <end position="545"/>
    </location>
</feature>
<feature type="modified residue" description="N6-(pyridoxal phosphate)lysine" evidence="1">
    <location>
        <position position="342"/>
    </location>
</feature>
<feature type="mutagenesis site" description="No effect on function in sphingolipid catabolic process." evidence="5">
    <original>E</original>
    <variation>G</variation>
    <location>
        <position position="119"/>
    </location>
</feature>
<feature type="mutagenesis site" description="Decreased function in sphingolipid catabolic process." evidence="5">
    <original>R</original>
    <variation>Q</variation>
    <location>
        <position position="210"/>
    </location>
</feature>
<feature type="mutagenesis site" description="Loss of function in sphingolipid catabolic process." evidence="5">
    <original>S</original>
    <variation>I</variation>
    <location>
        <position position="335"/>
    </location>
</feature>
<gene>
    <name evidence="7" type="primary">Sply</name>
    <name type="synonym">Spl</name>
    <name type="ORF">CG8946</name>
</gene>
<protein>
    <recommendedName>
        <fullName evidence="6">Sphingosine-1-phosphate lyase</fullName>
        <shortName>S1PL</shortName>
        <shortName>SP-lyase</shortName>
        <shortName>SPL</shortName>
        <ecNumber evidence="4">4.1.2.27</ecNumber>
    </recommendedName>
    <alternativeName>
        <fullName>Sphingosine-1-phosphate aldolase</fullName>
    </alternativeName>
</protein>
<evidence type="ECO:0000250" key="1"/>
<evidence type="ECO:0000250" key="2">
    <source>
        <dbReference type="UniProtKB" id="O95470"/>
    </source>
</evidence>
<evidence type="ECO:0000255" key="3"/>
<evidence type="ECO:0000269" key="4">
    <source>
    </source>
</evidence>
<evidence type="ECO:0000269" key="5">
    <source>
    </source>
</evidence>
<evidence type="ECO:0000305" key="6"/>
<evidence type="ECO:0000312" key="7">
    <source>
        <dbReference type="FlyBase" id="FBgn0010591"/>
    </source>
</evidence>
<comment type="function">
    <text evidence="4 5">Cleaves phosphorylated sphingoid bases (PSBs), such as sphingosine-1-phosphate, into fatty aldehydes and phosphoethanolamine. Sphingolipid catabolism is required for normal development including viability, reproduction and muscle development.</text>
</comment>
<comment type="catalytic activity">
    <reaction evidence="4">
        <text>sphinganine 1-phosphate = hexadecanal + phosphoethanolamine</text>
        <dbReference type="Rhea" id="RHEA:18593"/>
        <dbReference type="ChEBI" id="CHEBI:17600"/>
        <dbReference type="ChEBI" id="CHEBI:57939"/>
        <dbReference type="ChEBI" id="CHEBI:58190"/>
        <dbReference type="EC" id="4.1.2.27"/>
    </reaction>
</comment>
<comment type="cofactor">
    <cofactor evidence="1">
        <name>pyridoxal 5'-phosphate</name>
        <dbReference type="ChEBI" id="CHEBI:597326"/>
    </cofactor>
</comment>
<comment type="pathway">
    <text evidence="4 5">Lipid metabolism; sphingolipid metabolism.</text>
</comment>
<comment type="subcellular location">
    <subcellularLocation>
        <location evidence="2">Endoplasmic reticulum membrane</location>
        <topology evidence="3">Single-pass type III membrane protein</topology>
    </subcellularLocation>
</comment>
<comment type="tissue specificity">
    <text evidence="4">Localized to the developing gut primordium during embryogenesis.</text>
</comment>
<comment type="developmental stage">
    <text evidence="4">Expressed both maternally and zygotically. Expression is high in early and late embryos, and then again early in metamorphosis, followed by reduction to basal levels after eclosion of adult flies in both males and females.</text>
</comment>
<comment type="disruption phenotype">
    <text evidence="5">Flies lacking Sply display decreased viability associated with altered nephrocytes morphology. Altered lipid metabolism with accumulation of sphingosine-1-phosphate upstream intermediates is observed.</text>
</comment>
<comment type="similarity">
    <text evidence="6">Belongs to the group II decarboxylase family. Sphingosine-1-phosphate lyase subfamily.</text>
</comment>